<gene>
    <name evidence="1" type="primary">glyS</name>
    <name type="ordered locus">PA0008</name>
</gene>
<protein>
    <recommendedName>
        <fullName evidence="1">Glycine--tRNA ligase beta subunit</fullName>
        <ecNumber evidence="1">6.1.1.14</ecNumber>
    </recommendedName>
    <alternativeName>
        <fullName evidence="1">Glycyl-tRNA synthetase beta subunit</fullName>
        <shortName evidence="1">GlyRS</shortName>
    </alternativeName>
</protein>
<name>SYGB_PSEAE</name>
<organism>
    <name type="scientific">Pseudomonas aeruginosa (strain ATCC 15692 / DSM 22644 / CIP 104116 / JCM 14847 / LMG 12228 / 1C / PRS 101 / PAO1)</name>
    <dbReference type="NCBI Taxonomy" id="208964"/>
    <lineage>
        <taxon>Bacteria</taxon>
        <taxon>Pseudomonadati</taxon>
        <taxon>Pseudomonadota</taxon>
        <taxon>Gammaproteobacteria</taxon>
        <taxon>Pseudomonadales</taxon>
        <taxon>Pseudomonadaceae</taxon>
        <taxon>Pseudomonas</taxon>
    </lineage>
</organism>
<reference key="1">
    <citation type="journal article" date="2000" name="Nature">
        <title>Complete genome sequence of Pseudomonas aeruginosa PAO1, an opportunistic pathogen.</title>
        <authorList>
            <person name="Stover C.K."/>
            <person name="Pham X.-Q.T."/>
            <person name="Erwin A.L."/>
            <person name="Mizoguchi S.D."/>
            <person name="Warrener P."/>
            <person name="Hickey M.J."/>
            <person name="Brinkman F.S.L."/>
            <person name="Hufnagle W.O."/>
            <person name="Kowalik D.J."/>
            <person name="Lagrou M."/>
            <person name="Garber R.L."/>
            <person name="Goltry L."/>
            <person name="Tolentino E."/>
            <person name="Westbrock-Wadman S."/>
            <person name="Yuan Y."/>
            <person name="Brody L.L."/>
            <person name="Coulter S.N."/>
            <person name="Folger K.R."/>
            <person name="Kas A."/>
            <person name="Larbig K."/>
            <person name="Lim R.M."/>
            <person name="Smith K.A."/>
            <person name="Spencer D.H."/>
            <person name="Wong G.K.-S."/>
            <person name="Wu Z."/>
            <person name="Paulsen I.T."/>
            <person name="Reizer J."/>
            <person name="Saier M.H. Jr."/>
            <person name="Hancock R.E.W."/>
            <person name="Lory S."/>
            <person name="Olson M.V."/>
        </authorList>
    </citation>
    <scope>NUCLEOTIDE SEQUENCE [LARGE SCALE GENOMIC DNA]</scope>
    <source>
        <strain>ATCC 15692 / DSM 22644 / CIP 104116 / JCM 14847 / LMG 12228 / 1C / PRS 101 / PAO1</strain>
    </source>
</reference>
<accession>Q9I7B8</accession>
<comment type="catalytic activity">
    <reaction evidence="1">
        <text>tRNA(Gly) + glycine + ATP = glycyl-tRNA(Gly) + AMP + diphosphate</text>
        <dbReference type="Rhea" id="RHEA:16013"/>
        <dbReference type="Rhea" id="RHEA-COMP:9664"/>
        <dbReference type="Rhea" id="RHEA-COMP:9683"/>
        <dbReference type="ChEBI" id="CHEBI:30616"/>
        <dbReference type="ChEBI" id="CHEBI:33019"/>
        <dbReference type="ChEBI" id="CHEBI:57305"/>
        <dbReference type="ChEBI" id="CHEBI:78442"/>
        <dbReference type="ChEBI" id="CHEBI:78522"/>
        <dbReference type="ChEBI" id="CHEBI:456215"/>
        <dbReference type="EC" id="6.1.1.14"/>
    </reaction>
</comment>
<comment type="subunit">
    <text evidence="1">Tetramer of two alpha and two beta subunits.</text>
</comment>
<comment type="subcellular location">
    <subcellularLocation>
        <location evidence="1">Cytoplasm</location>
    </subcellularLocation>
</comment>
<comment type="similarity">
    <text evidence="1">Belongs to the class-II aminoacyl-tRNA synthetase family.</text>
</comment>
<keyword id="KW-0030">Aminoacyl-tRNA synthetase</keyword>
<keyword id="KW-0067">ATP-binding</keyword>
<keyword id="KW-0963">Cytoplasm</keyword>
<keyword id="KW-0436">Ligase</keyword>
<keyword id="KW-0547">Nucleotide-binding</keyword>
<keyword id="KW-0648">Protein biosynthesis</keyword>
<keyword id="KW-1185">Reference proteome</keyword>
<feature type="chain" id="PRO_0000072918" description="Glycine--tRNA ligase beta subunit">
    <location>
        <begin position="1"/>
        <end position="684"/>
    </location>
</feature>
<dbReference type="EC" id="6.1.1.14" evidence="1"/>
<dbReference type="EMBL" id="AE004091">
    <property type="protein sequence ID" value="AAG03398.1"/>
    <property type="molecule type" value="Genomic_DNA"/>
</dbReference>
<dbReference type="PIR" id="D83645">
    <property type="entry name" value="D83645"/>
</dbReference>
<dbReference type="RefSeq" id="NP_064728.1">
    <property type="nucleotide sequence ID" value="NC_002516.2"/>
</dbReference>
<dbReference type="RefSeq" id="WP_003114646.1">
    <property type="nucleotide sequence ID" value="NZ_QZGE01000012.1"/>
</dbReference>
<dbReference type="SMR" id="Q9I7B8"/>
<dbReference type="FunCoup" id="Q9I7B8">
    <property type="interactions" value="632"/>
</dbReference>
<dbReference type="STRING" id="208964.PA0008"/>
<dbReference type="PaxDb" id="208964-PA0008"/>
<dbReference type="DNASU" id="878214"/>
<dbReference type="GeneID" id="878214"/>
<dbReference type="KEGG" id="pae:PA0008"/>
<dbReference type="PATRIC" id="fig|208964.12.peg.8"/>
<dbReference type="PseudoCAP" id="PA0008"/>
<dbReference type="HOGENOM" id="CLU_007220_2_2_6"/>
<dbReference type="InParanoid" id="Q9I7B8"/>
<dbReference type="OrthoDB" id="9775440at2"/>
<dbReference type="PhylomeDB" id="Q9I7B8"/>
<dbReference type="BioCyc" id="PAER208964:G1FZ6-8-MONOMER"/>
<dbReference type="Proteomes" id="UP000002438">
    <property type="component" value="Chromosome"/>
</dbReference>
<dbReference type="GO" id="GO:0005829">
    <property type="term" value="C:cytosol"/>
    <property type="evidence" value="ECO:0000318"/>
    <property type="project" value="GO_Central"/>
</dbReference>
<dbReference type="GO" id="GO:0004814">
    <property type="term" value="F:arginine-tRNA ligase activity"/>
    <property type="evidence" value="ECO:0007669"/>
    <property type="project" value="InterPro"/>
</dbReference>
<dbReference type="GO" id="GO:0005524">
    <property type="term" value="F:ATP binding"/>
    <property type="evidence" value="ECO:0007669"/>
    <property type="project" value="UniProtKB-UniRule"/>
</dbReference>
<dbReference type="GO" id="GO:0004820">
    <property type="term" value="F:glycine-tRNA ligase activity"/>
    <property type="evidence" value="ECO:0007669"/>
    <property type="project" value="UniProtKB-UniRule"/>
</dbReference>
<dbReference type="GO" id="GO:0006420">
    <property type="term" value="P:arginyl-tRNA aminoacylation"/>
    <property type="evidence" value="ECO:0007669"/>
    <property type="project" value="InterPro"/>
</dbReference>
<dbReference type="GO" id="GO:0006426">
    <property type="term" value="P:glycyl-tRNA aminoacylation"/>
    <property type="evidence" value="ECO:0007669"/>
    <property type="project" value="UniProtKB-UniRule"/>
</dbReference>
<dbReference type="HAMAP" id="MF_00255">
    <property type="entry name" value="Gly_tRNA_synth_beta"/>
    <property type="match status" value="1"/>
</dbReference>
<dbReference type="InterPro" id="IPR008909">
    <property type="entry name" value="DALR_anticod-bd"/>
</dbReference>
<dbReference type="InterPro" id="IPR015944">
    <property type="entry name" value="Gly-tRNA-synth_bsu"/>
</dbReference>
<dbReference type="InterPro" id="IPR006194">
    <property type="entry name" value="Gly-tRNA-synth_heterodimer"/>
</dbReference>
<dbReference type="NCBIfam" id="TIGR00211">
    <property type="entry name" value="glyS"/>
    <property type="match status" value="1"/>
</dbReference>
<dbReference type="PANTHER" id="PTHR30075:SF2">
    <property type="entry name" value="GLYCINE--TRNA LIGASE, CHLOROPLASTIC_MITOCHONDRIAL 2"/>
    <property type="match status" value="1"/>
</dbReference>
<dbReference type="PANTHER" id="PTHR30075">
    <property type="entry name" value="GLYCYL-TRNA SYNTHETASE"/>
    <property type="match status" value="1"/>
</dbReference>
<dbReference type="Pfam" id="PF05746">
    <property type="entry name" value="DALR_1"/>
    <property type="match status" value="1"/>
</dbReference>
<dbReference type="Pfam" id="PF02092">
    <property type="entry name" value="tRNA_synt_2f"/>
    <property type="match status" value="1"/>
</dbReference>
<dbReference type="PRINTS" id="PR01045">
    <property type="entry name" value="TRNASYNTHGB"/>
</dbReference>
<dbReference type="SMART" id="SM00836">
    <property type="entry name" value="DALR_1"/>
    <property type="match status" value="1"/>
</dbReference>
<dbReference type="SUPFAM" id="SSF109604">
    <property type="entry name" value="HD-domain/PDEase-like"/>
    <property type="match status" value="1"/>
</dbReference>
<dbReference type="PROSITE" id="PS50861">
    <property type="entry name" value="AA_TRNA_LIGASE_II_GLYAB"/>
    <property type="match status" value="1"/>
</dbReference>
<evidence type="ECO:0000255" key="1">
    <source>
        <dbReference type="HAMAP-Rule" id="MF_00255"/>
    </source>
</evidence>
<sequence>MSAKDFLVELGTEELPPKALNSLGEAFLSGIEKGLKAAGLSYAAARFYAAPRRLAVLVEQLAVQQPDRTVNLDGPPLQAAFDASGNPTQAALGFAKKCGVDLQQIDKSGPKLRFIQTIAGQPAAGLLPGIVEASLNELPIPKRMRWAARREEFVRPTQWLVMLFGDDVVECEILAQKAGRESRGHRFHNPDNVRISSPAAYLEDLRGAHVLADFAERRELIAKRVAELAAEQQGSAIVPPSLLDEVTALVEWPVPLVCSFEERFLEVPQEALITTMQDNQKYFCLLDANGKLLPRFITVANVESKAPENIVSGNEKVVRPRLTDAEFFFKQDKKQPLESFNERLRNVVFQAQLGTVFEKAQRVSGLAAYIAERIGGNAQNASRAGILSKCDLATEMVGEFPEMQGIAGYYYATHGGEAEDVALALNEQYMPRGAGAELPSTLTGAAVAVADKLDTLVGIFGIGMLPTGSKDPYALRRAALGVLRILIEKQLDLDLVAAVNAAVEQYGDKVKAAGLAEQVLDFVFDRLRARYEDEGVDVAVYQSVRALKPSSPLDFDQRVQAVQAFRQLPEAEALAAANKRVSNILAKSEDEVPPNVDASLLVEAAEKALGSAVANAESEVAPLAAARDYRAALARLAALREPVDTFFADVMVNVDDAAVRANRYALLAKLRGSFLGVADISLLG</sequence>
<proteinExistence type="inferred from homology"/>